<feature type="chain" id="PRO_0000288931" description="AT-rich interactive domain-containing protein 5A">
    <location>
        <begin position="1"/>
        <end position="590"/>
    </location>
</feature>
<feature type="domain" description="ARID" evidence="2">
    <location>
        <begin position="50"/>
        <end position="142"/>
    </location>
</feature>
<feature type="region of interest" description="Interaction with SOX9" evidence="4">
    <location>
        <begin position="1"/>
        <end position="294"/>
    </location>
</feature>
<feature type="region of interest" description="Disordered" evidence="3">
    <location>
        <begin position="1"/>
        <end position="52"/>
    </location>
</feature>
<feature type="region of interest" description="Disordered" evidence="3">
    <location>
        <begin position="141"/>
        <end position="229"/>
    </location>
</feature>
<feature type="region of interest" description="Disordered" evidence="3">
    <location>
        <begin position="275"/>
        <end position="323"/>
    </location>
</feature>
<feature type="region of interest" description="Disordered" evidence="3">
    <location>
        <begin position="367"/>
        <end position="402"/>
    </location>
</feature>
<feature type="region of interest" description="Disordered" evidence="3">
    <location>
        <begin position="419"/>
        <end position="443"/>
    </location>
</feature>
<feature type="compositionally biased region" description="Polar residues" evidence="3">
    <location>
        <begin position="33"/>
        <end position="42"/>
    </location>
</feature>
<feature type="compositionally biased region" description="Basic and acidic residues" evidence="3">
    <location>
        <begin position="160"/>
        <end position="186"/>
    </location>
</feature>
<feature type="compositionally biased region" description="Polar residues" evidence="3">
    <location>
        <begin position="187"/>
        <end position="210"/>
    </location>
</feature>
<feature type="compositionally biased region" description="Basic and acidic residues" evidence="3">
    <location>
        <begin position="367"/>
        <end position="381"/>
    </location>
</feature>
<feature type="modified residue" description="Phosphoserine" evidence="14">
    <location>
        <position position="24"/>
    </location>
</feature>
<feature type="modified residue" description="Phosphoserine" evidence="9">
    <location>
        <position position="253"/>
    </location>
</feature>
<feature type="modified residue" description="Phosphoserine" evidence="14">
    <location>
        <position position="283"/>
    </location>
</feature>
<feature type="modified residue" description="Phosphoserine" evidence="9">
    <location>
        <position position="433"/>
    </location>
</feature>
<feature type="modified residue" description="Phosphoserine" evidence="9">
    <location>
        <position position="458"/>
    </location>
</feature>
<feature type="cross-link" description="Glycyl lysine isopeptide (Lys-Gly) (interchain with G-Cter in ubiquitin)" evidence="9">
    <location>
        <position position="80"/>
    </location>
</feature>
<feature type="cross-link" description="Glycyl lysine isopeptide (Lys-Gly) (interchain with G-Cter in ubiquitin)" evidence="9">
    <location>
        <position position="89"/>
    </location>
</feature>
<feature type="splice variant" id="VSP_025838" description="In isoform 5." evidence="11 12">
    <location>
        <begin position="1"/>
        <end position="159"/>
    </location>
</feature>
<feature type="splice variant" id="VSP_025839" description="In isoform 2." evidence="12">
    <original>MA</original>
    <variation>MLKGGRPDLCVVNSLIKLQKLKLHVDAEHQT</variation>
    <location>
        <begin position="1"/>
        <end position="2"/>
    </location>
</feature>
<feature type="splice variant" id="VSP_025840" description="In isoform 3." evidence="12">
    <location>
        <position position="2"/>
    </location>
</feature>
<feature type="splice variant" id="VSP_025841" description="In isoform 4." evidence="12">
    <location>
        <begin position="42"/>
        <end position="99"/>
    </location>
</feature>
<feature type="splice variant" id="VSP_025842" description="In isoform 3." evidence="12">
    <original>QI</original>
    <variation>QSASLGGGGWCSGRVSVGGQQPGDVPRQDNRQGTSAKGDPGCRQPVGVACEDGASLKARGGVGFSSSWAACPVHNSGPAWECGVTEPDRLPCLFPSV</variation>
    <location>
        <begin position="81"/>
        <end position="82"/>
    </location>
</feature>
<feature type="mutagenesis site" description="Abolishes binding to STAT3 3'UTR stem loop structure. Abolishes binding to TNFRSF4/OX40 mRNA." evidence="7 10">
    <original>R</original>
    <variation>A</variation>
    <location>
        <position position="128"/>
    </location>
</feature>
<feature type="mutagenesis site" description="Abolishes ubiquitination; largely impairs proteasomal degradation; results in overproduction of IL-6 upon overexpression; in association with A-433 and A-458." evidence="9">
    <original>S</original>
    <variation>A</variation>
    <location>
        <position position="253"/>
    </location>
</feature>
<feature type="mutagenesis site" description="Abolishes ubiquitination; largely impairs proteasomal degradation; results in overproduction of IL-6 upon overexpression; in association with A-253 and A-458." evidence="9">
    <original>S</original>
    <variation>A</variation>
    <location>
        <position position="433"/>
    </location>
</feature>
<feature type="mutagenesis site" description="Abolishes ubiquitination; largely impairs proteasomal degradation; results in overproduction of IL-6 upon overexpression; in association with A-253 and A-433." evidence="9">
    <original>S</original>
    <variation>A</variation>
    <location>
        <position position="458"/>
    </location>
</feature>
<feature type="sequence conflict" description="In Ref. 1; BAE34133." evidence="13" ref="1">
    <original>E</original>
    <variation>K</variation>
    <location>
        <position position="51"/>
    </location>
</feature>
<feature type="sequence conflict" description="In Ref. 1; BAE29358." evidence="13" ref="1">
    <original>L</original>
    <variation>Q</variation>
    <location>
        <position position="94"/>
    </location>
</feature>
<feature type="sequence conflict" description="In Ref. 2; AAH27152." evidence="13" ref="2">
    <original>S</original>
    <variation>P</variation>
    <location>
        <position position="540"/>
    </location>
</feature>
<feature type="sequence conflict" description="In Ref. 1; BAE29115." evidence="13" ref="1">
    <original>H</original>
    <variation>R</variation>
    <location>
        <position position="585"/>
    </location>
</feature>
<organism>
    <name type="scientific">Mus musculus</name>
    <name type="common">Mouse</name>
    <dbReference type="NCBI Taxonomy" id="10090"/>
    <lineage>
        <taxon>Eukaryota</taxon>
        <taxon>Metazoa</taxon>
        <taxon>Chordata</taxon>
        <taxon>Craniata</taxon>
        <taxon>Vertebrata</taxon>
        <taxon>Euteleostomi</taxon>
        <taxon>Mammalia</taxon>
        <taxon>Eutheria</taxon>
        <taxon>Euarchontoglires</taxon>
        <taxon>Glires</taxon>
        <taxon>Rodentia</taxon>
        <taxon>Myomorpha</taxon>
        <taxon>Muroidea</taxon>
        <taxon>Muridae</taxon>
        <taxon>Murinae</taxon>
        <taxon>Mus</taxon>
        <taxon>Mus</taxon>
    </lineage>
</organism>
<gene>
    <name type="primary">Arid5a</name>
</gene>
<protein>
    <recommendedName>
        <fullName>AT-rich interactive domain-containing protein 5A</fullName>
        <shortName>ARID domain-containing protein 5A</shortName>
    </recommendedName>
</protein>
<proteinExistence type="evidence at protein level"/>
<keyword id="KW-0010">Activator</keyword>
<keyword id="KW-0025">Alternative splicing</keyword>
<keyword id="KW-0238">DNA-binding</keyword>
<keyword id="KW-0391">Immunity</keyword>
<keyword id="KW-0399">Innate immunity</keyword>
<keyword id="KW-1017">Isopeptide bond</keyword>
<keyword id="KW-0539">Nucleus</keyword>
<keyword id="KW-0597">Phosphoprotein</keyword>
<keyword id="KW-1185">Reference proteome</keyword>
<keyword id="KW-0678">Repressor</keyword>
<keyword id="KW-0694">RNA-binding</keyword>
<keyword id="KW-0804">Transcription</keyword>
<keyword id="KW-0805">Transcription regulation</keyword>
<keyword id="KW-0832">Ubl conjugation</keyword>
<reference key="1">
    <citation type="journal article" date="2005" name="Science">
        <title>The transcriptional landscape of the mammalian genome.</title>
        <authorList>
            <person name="Carninci P."/>
            <person name="Kasukawa T."/>
            <person name="Katayama S."/>
            <person name="Gough J."/>
            <person name="Frith M.C."/>
            <person name="Maeda N."/>
            <person name="Oyama R."/>
            <person name="Ravasi T."/>
            <person name="Lenhard B."/>
            <person name="Wells C."/>
            <person name="Kodzius R."/>
            <person name="Shimokawa K."/>
            <person name="Bajic V.B."/>
            <person name="Brenner S.E."/>
            <person name="Batalov S."/>
            <person name="Forrest A.R."/>
            <person name="Zavolan M."/>
            <person name="Davis M.J."/>
            <person name="Wilming L.G."/>
            <person name="Aidinis V."/>
            <person name="Allen J.E."/>
            <person name="Ambesi-Impiombato A."/>
            <person name="Apweiler R."/>
            <person name="Aturaliya R.N."/>
            <person name="Bailey T.L."/>
            <person name="Bansal M."/>
            <person name="Baxter L."/>
            <person name="Beisel K.W."/>
            <person name="Bersano T."/>
            <person name="Bono H."/>
            <person name="Chalk A.M."/>
            <person name="Chiu K.P."/>
            <person name="Choudhary V."/>
            <person name="Christoffels A."/>
            <person name="Clutterbuck D.R."/>
            <person name="Crowe M.L."/>
            <person name="Dalla E."/>
            <person name="Dalrymple B.P."/>
            <person name="de Bono B."/>
            <person name="Della Gatta G."/>
            <person name="di Bernardo D."/>
            <person name="Down T."/>
            <person name="Engstrom P."/>
            <person name="Fagiolini M."/>
            <person name="Faulkner G."/>
            <person name="Fletcher C.F."/>
            <person name="Fukushima T."/>
            <person name="Furuno M."/>
            <person name="Futaki S."/>
            <person name="Gariboldi M."/>
            <person name="Georgii-Hemming P."/>
            <person name="Gingeras T.R."/>
            <person name="Gojobori T."/>
            <person name="Green R.E."/>
            <person name="Gustincich S."/>
            <person name="Harbers M."/>
            <person name="Hayashi Y."/>
            <person name="Hensch T.K."/>
            <person name="Hirokawa N."/>
            <person name="Hill D."/>
            <person name="Huminiecki L."/>
            <person name="Iacono M."/>
            <person name="Ikeo K."/>
            <person name="Iwama A."/>
            <person name="Ishikawa T."/>
            <person name="Jakt M."/>
            <person name="Kanapin A."/>
            <person name="Katoh M."/>
            <person name="Kawasawa Y."/>
            <person name="Kelso J."/>
            <person name="Kitamura H."/>
            <person name="Kitano H."/>
            <person name="Kollias G."/>
            <person name="Krishnan S.P."/>
            <person name="Kruger A."/>
            <person name="Kummerfeld S.K."/>
            <person name="Kurochkin I.V."/>
            <person name="Lareau L.F."/>
            <person name="Lazarevic D."/>
            <person name="Lipovich L."/>
            <person name="Liu J."/>
            <person name="Liuni S."/>
            <person name="McWilliam S."/>
            <person name="Madan Babu M."/>
            <person name="Madera M."/>
            <person name="Marchionni L."/>
            <person name="Matsuda H."/>
            <person name="Matsuzawa S."/>
            <person name="Miki H."/>
            <person name="Mignone F."/>
            <person name="Miyake S."/>
            <person name="Morris K."/>
            <person name="Mottagui-Tabar S."/>
            <person name="Mulder N."/>
            <person name="Nakano N."/>
            <person name="Nakauchi H."/>
            <person name="Ng P."/>
            <person name="Nilsson R."/>
            <person name="Nishiguchi S."/>
            <person name="Nishikawa S."/>
            <person name="Nori F."/>
            <person name="Ohara O."/>
            <person name="Okazaki Y."/>
            <person name="Orlando V."/>
            <person name="Pang K.C."/>
            <person name="Pavan W.J."/>
            <person name="Pavesi G."/>
            <person name="Pesole G."/>
            <person name="Petrovsky N."/>
            <person name="Piazza S."/>
            <person name="Reed J."/>
            <person name="Reid J.F."/>
            <person name="Ring B.Z."/>
            <person name="Ringwald M."/>
            <person name="Rost B."/>
            <person name="Ruan Y."/>
            <person name="Salzberg S.L."/>
            <person name="Sandelin A."/>
            <person name="Schneider C."/>
            <person name="Schoenbach C."/>
            <person name="Sekiguchi K."/>
            <person name="Semple C.A."/>
            <person name="Seno S."/>
            <person name="Sessa L."/>
            <person name="Sheng Y."/>
            <person name="Shibata Y."/>
            <person name="Shimada H."/>
            <person name="Shimada K."/>
            <person name="Silva D."/>
            <person name="Sinclair B."/>
            <person name="Sperling S."/>
            <person name="Stupka E."/>
            <person name="Sugiura K."/>
            <person name="Sultana R."/>
            <person name="Takenaka Y."/>
            <person name="Taki K."/>
            <person name="Tammoja K."/>
            <person name="Tan S.L."/>
            <person name="Tang S."/>
            <person name="Taylor M.S."/>
            <person name="Tegner J."/>
            <person name="Teichmann S.A."/>
            <person name="Ueda H.R."/>
            <person name="van Nimwegen E."/>
            <person name="Verardo R."/>
            <person name="Wei C.L."/>
            <person name="Yagi K."/>
            <person name="Yamanishi H."/>
            <person name="Zabarovsky E."/>
            <person name="Zhu S."/>
            <person name="Zimmer A."/>
            <person name="Hide W."/>
            <person name="Bult C."/>
            <person name="Grimmond S.M."/>
            <person name="Teasdale R.D."/>
            <person name="Liu E.T."/>
            <person name="Brusic V."/>
            <person name="Quackenbush J."/>
            <person name="Wahlestedt C."/>
            <person name="Mattick J.S."/>
            <person name="Hume D.A."/>
            <person name="Kai C."/>
            <person name="Sasaki D."/>
            <person name="Tomaru Y."/>
            <person name="Fukuda S."/>
            <person name="Kanamori-Katayama M."/>
            <person name="Suzuki M."/>
            <person name="Aoki J."/>
            <person name="Arakawa T."/>
            <person name="Iida J."/>
            <person name="Imamura K."/>
            <person name="Itoh M."/>
            <person name="Kato T."/>
            <person name="Kawaji H."/>
            <person name="Kawagashira N."/>
            <person name="Kawashima T."/>
            <person name="Kojima M."/>
            <person name="Kondo S."/>
            <person name="Konno H."/>
            <person name="Nakano K."/>
            <person name="Ninomiya N."/>
            <person name="Nishio T."/>
            <person name="Okada M."/>
            <person name="Plessy C."/>
            <person name="Shibata K."/>
            <person name="Shiraki T."/>
            <person name="Suzuki S."/>
            <person name="Tagami M."/>
            <person name="Waki K."/>
            <person name="Watahiki A."/>
            <person name="Okamura-Oho Y."/>
            <person name="Suzuki H."/>
            <person name="Kawai J."/>
            <person name="Hayashizaki Y."/>
        </authorList>
    </citation>
    <scope>NUCLEOTIDE SEQUENCE [LARGE SCALE MRNA] (ISOFORMS 1; 2; 3; 4 AND 5)</scope>
    <source>
        <strain>C57BL/6J</strain>
        <strain>NOD</strain>
        <tissue>Bone marrow</tissue>
        <tissue>Embryonic lung</tissue>
        <tissue>Spleen</tissue>
        <tissue>Thymus</tissue>
    </source>
</reference>
<reference key="2">
    <citation type="journal article" date="2004" name="Genome Res.">
        <title>The status, quality, and expansion of the NIH full-length cDNA project: the Mammalian Gene Collection (MGC).</title>
        <authorList>
            <consortium name="The MGC Project Team"/>
        </authorList>
    </citation>
    <scope>NUCLEOTIDE SEQUENCE [LARGE SCALE MRNA] (ISOFORM 5)</scope>
    <source>
        <strain>FVB/N</strain>
        <tissue>Mammary tumor</tissue>
    </source>
</reference>
<reference key="3">
    <citation type="journal article" date="2010" name="Cell">
        <title>A tissue-specific atlas of mouse protein phosphorylation and expression.</title>
        <authorList>
            <person name="Huttlin E.L."/>
            <person name="Jedrychowski M.P."/>
            <person name="Elias J.E."/>
            <person name="Goswami T."/>
            <person name="Rad R."/>
            <person name="Beausoleil S.A."/>
            <person name="Villen J."/>
            <person name="Haas W."/>
            <person name="Sowa M.E."/>
            <person name="Gygi S.P."/>
        </authorList>
    </citation>
    <scope>PHOSPHORYLATION [LARGE SCALE ANALYSIS] AT SER-24 AND SER-283</scope>
    <scope>IDENTIFICATION BY MASS SPECTROMETRY [LARGE SCALE ANALYSIS]</scope>
    <source>
        <tissue>Lung</tissue>
        <tissue>Spleen</tissue>
    </source>
</reference>
<reference key="4">
    <citation type="journal article" date="2011" name="Mol. Biol. Cell">
        <title>Arid5a cooperates with Sox9 to stimulate chondrocyte-specific transcription.</title>
        <authorList>
            <person name="Amano K."/>
            <person name="Hata K."/>
            <person name="Muramatsu S."/>
            <person name="Wakabayashi M."/>
            <person name="Takigawa Y."/>
            <person name="Ono K."/>
            <person name="Nakanishi M."/>
            <person name="Takashima R."/>
            <person name="Kogo M."/>
            <person name="Matsuda A."/>
            <person name="Nishimura R."/>
            <person name="Yoneda T."/>
        </authorList>
    </citation>
    <scope>FUNCTION</scope>
    <scope>INTERACTION WITH SOX9</scope>
    <scope>TISSUE SPECIFICITY</scope>
    <scope>SUBCELLULAR LOCATION</scope>
    <scope>INDUCTION</scope>
</reference>
<reference key="5">
    <citation type="journal article" date="2013" name="Proc. Natl. Acad. Sci. U.S.A.">
        <title>Arid5a controls IL-6 mRNA stability, which contributes to elevation of IL-6 level in vivo.</title>
        <authorList>
            <person name="Masuda K."/>
            <person name="Ripley B."/>
            <person name="Nishimura R."/>
            <person name="Mino T."/>
            <person name="Takeuchi O."/>
            <person name="Shioi G."/>
            <person name="Kiyonari H."/>
            <person name="Kishimoto T."/>
        </authorList>
    </citation>
    <scope>FUNCTION</scope>
</reference>
<reference key="6">
    <citation type="journal article" date="2014" name="Arthritis Rheum.">
        <title>AT-rich-interactive domain-containing protein 5A functions as a negative regulator of retinoic acid receptor-related orphan nuclear receptor gammat-induced Th17 cell differentiation.</title>
        <authorList>
            <person name="Saito Y."/>
            <person name="Kagami S."/>
            <person name="Sanayama Y."/>
            <person name="Ikeda K."/>
            <person name="Suto A."/>
            <person name="Kashiwakuma D."/>
            <person name="Furuta S."/>
            <person name="Iwamoto I."/>
            <person name="Nonaka K."/>
            <person name="Ohara O."/>
            <person name="Nakajima H."/>
        </authorList>
    </citation>
    <scope>FUNCTION</scope>
    <scope>INTERACTION WITH RORC</scope>
    <scope>INDUCTION</scope>
</reference>
<reference key="7">
    <citation type="journal article" date="2016" name="J. Exp. Med.">
        <title>Arid5a regulates naive CD4+ T cell fate through selective stabilization of Stat3 mRNA.</title>
        <authorList>
            <person name="Masuda K."/>
            <person name="Ripley B."/>
            <person name="Nyati K.K."/>
            <person name="Dubey P.K."/>
            <person name="Zaman M.M."/>
            <person name="Hanieh H."/>
            <person name="Higa M."/>
            <person name="Yamashita K."/>
            <person name="Standley D.M."/>
            <person name="Mashima T."/>
            <person name="Katahira M."/>
            <person name="Okamoto T."/>
            <person name="Matsuura Y."/>
            <person name="Takeuchi O."/>
            <person name="Kishimoto T."/>
        </authorList>
    </citation>
    <scope>FUNCTION</scope>
    <scope>MUTAGENESIS OF ARG-128</scope>
</reference>
<reference key="8">
    <citation type="journal article" date="2016" name="Proc. Natl. Acad. Sci. U.S.A.">
        <title>Arid5a exacerbates IFN-gamma-mediated septic shock by stabilizing T-bet mRNA.</title>
        <authorList>
            <person name="Zaman M.M."/>
            <person name="Masuda K."/>
            <person name="Nyati K.K."/>
            <person name="Dubey P.K."/>
            <person name="Ripley B."/>
            <person name="Wang K."/>
            <person name="Chalise J.P."/>
            <person name="Higa M."/>
            <person name="Hanieh H."/>
            <person name="Kishimoto T."/>
        </authorList>
    </citation>
    <scope>FUNCTION</scope>
</reference>
<reference key="9">
    <citation type="journal article" date="2017" name="Nucleic Acids Res.">
        <title>TLR4-induced NF-kappaB and MAPK signaling regulate the IL-6 mRNA stabilizing protein Arid5a.</title>
        <authorList>
            <person name="Nyati K.K."/>
            <person name="Masuda K."/>
            <person name="Zaman M.M."/>
            <person name="Dubey P.K."/>
            <person name="Millrine D."/>
            <person name="Chalise J.P."/>
            <person name="Higa M."/>
            <person name="Li S."/>
            <person name="Standley D.M."/>
            <person name="Saito K."/>
            <person name="Hanieh H."/>
            <person name="Kishimoto T."/>
        </authorList>
    </citation>
    <scope>PHOSPHORYLATION AT SER-253; SER-433 AND SER-458</scope>
    <scope>UBIQUITINATION AT LYS-80 AND LYS-89</scope>
    <scope>MUTAGENESIS OF SER-253; SER-433 AND SER-458</scope>
</reference>
<reference key="10">
    <citation type="journal article" date="2018" name="Eur. J. Immunol.">
        <title>Arid5a stabilizes OX40 mRNA in murine CD4+ T cells by recognizing a stem-loop structure in its 3'UTR.</title>
        <authorList>
            <person name="Hanieh H."/>
            <person name="Masuda K."/>
            <person name="Metwally H."/>
            <person name="Chalise J.P."/>
            <person name="Mohamed M."/>
            <person name="Nyati K.K."/>
            <person name="Standley D.M."/>
            <person name="Li S."/>
            <person name="Higa M."/>
            <person name="Zaman M.M."/>
            <person name="Kishimoto T."/>
        </authorList>
    </citation>
    <scope>FUNCTION</scope>
    <scope>TISSUE SPECIFICITY</scope>
    <scope>INDUCTION</scope>
    <scope>DISRUPTION PHENOTYPE</scope>
    <scope>MUTAGENESIS OF ARG-128</scope>
</reference>
<accession>Q3U108</accession>
<accession>Q3TZS4</accession>
<accession>Q3U0F0</accession>
<accession>Q3U0S2</accession>
<accession>Q3UDA3</accession>
<accession>Q3UDZ6</accession>
<accession>Q8BI45</accession>
<accession>Q8BYB5</accession>
<accession>Q8R2W1</accession>
<name>ARI5A_MOUSE</name>
<comment type="function">
    <text evidence="1 4 5 6 7 8 10">DNA-binding protein that may regulate transcription and act as a repressor by binding to AT-rich stretches in the promoter region of target genes (By similarity). May positively regulate chondrocyte-specific transcription such as of COL2A1 in collaboration with SOX9 and positively regulate histone H3 acetylation at chondrocyte-specific genes. May stimulate early-stage chondrocyte differentiation and inhibit later stage differention (PubMed:21346191). Can repress ESR1-mediated transcriptional activation; proposed to act as corepressor for selective nuclear hormone receptors (By similarity). As an RNA-binding protein, involved in the regulation of inflammatory response by stabilizing selective inflammation-related mRNAs, such as STAT3 and TBX21. Also stabilizes IL6 mRNA. Binds to stem loop structures located in the 3'UTRs of IL6, STAT3 and TBX21 mRNAs; at least for STAT3 prevents binding of ZC3H12A to the mRNA stem loop structure thus inhibiting its degradation activity. Contributes to elevated IL6 levels possibly implicated in autoimmunity processes. IL6-dependent stabilization of STAT3 mRNA may promote differentiation of naive CD4+ T-cells into T-helper Th17 cells (PubMed:23676272, PubMed:27022145). In CD4+ T-cells may also inhibit RORC-induced Th17 cell differentiation independently of IL6 signaling (PubMed:24782182). Stabilization of TBX21 mRNA contributes to elevated interferon-gamma secretion in Th1 cells possibly implicated in the establishment of septic shock (PubMed:27671645). Stabilizes TNFRSF4/OX40 mRNA by binding to the conserved stem loop structure in its 3'UTR; thereby competing with the mRNA-destabilizing functions of RC3H1 and endoribonuclease ZC3H12A (PubMed:29244194).</text>
</comment>
<comment type="subunit">
    <text evidence="1 4 6">Interacts with SOX9 (PubMed:21346191). Interacts with ESR1 (By similarity). Interacts with RORC (PubMed:24782182).</text>
</comment>
<comment type="interaction">
    <interactant intactId="EBI-14022639">
        <id>Q3U108</id>
    </interactant>
    <interactant intactId="EBI-3920028">
        <id>P48436</id>
        <label>SOX9</label>
    </interactant>
    <organismsDiffer>true</organismsDiffer>
    <experiments>3</experiments>
</comment>
<comment type="subcellular location">
    <subcellularLocation>
        <location evidence="2 4">Nucleus</location>
    </subcellularLocation>
</comment>
<comment type="alternative products">
    <event type="alternative splicing"/>
    <isoform>
        <id>Q3U108-1</id>
        <name>1</name>
        <sequence type="displayed"/>
    </isoform>
    <isoform>
        <id>Q3U108-2</id>
        <name>2</name>
        <sequence type="described" ref="VSP_025839"/>
    </isoform>
    <isoform>
        <id>Q3U108-3</id>
        <name>3</name>
        <sequence type="described" ref="VSP_025840 VSP_025842"/>
    </isoform>
    <isoform>
        <id>Q3U108-4</id>
        <name>4</name>
        <sequence type="described" ref="VSP_025841"/>
    </isoform>
    <isoform>
        <id>Q3U108-5</id>
        <name>5</name>
        <sequence type="described" ref="VSP_025838"/>
    </isoform>
</comment>
<comment type="tissue specificity">
    <text evidence="4 10">Expressed in T cells (at protein level) (PubMed:29244194). Expressed at high levels in cartilage, heart, testis and bone (PubMed:21346191).</text>
</comment>
<comment type="induction">
    <text evidence="4 6 10">In macrophages by LPS, IL1B and IL6 (PubMed:21346191). By IL6/STAT3 signaling in T-helper Th17 cells (PubMed:24782182, PubMed:29244194).</text>
</comment>
<comment type="PTM">
    <text evidence="9">Phosphorylated by MAPK14 on serine residues involving a TLR4 signaling pathway upon lipopolysaccharide (LPS) stimulation leading to its ubiquitination and proteasomal degradation.</text>
</comment>
<comment type="PTM">
    <text evidence="9">Ubiquitinated leading to proteasomal degradation; involving WWP1 linked to MAPK14-mediated phosphorylation upon LPS stimulation.</text>
</comment>
<comment type="disruption phenotype">
    <text evidence="10">Mice are resistant to experimental autoimmune encephalomyelitis (EAE), a T-cell-mediated autoimmune model (PubMed:29244194). The expression of pro-inflammatory mediators is severely reduced in EAE (PubMed:29244194).</text>
</comment>
<dbReference type="EMBL" id="AK041344">
    <property type="protein sequence ID" value="BAC30913.1"/>
    <property type="molecule type" value="mRNA"/>
</dbReference>
<dbReference type="EMBL" id="AK085015">
    <property type="protein sequence ID" value="BAC39338.1"/>
    <property type="molecule type" value="mRNA"/>
</dbReference>
<dbReference type="EMBL" id="AK149839">
    <property type="protein sequence ID" value="BAE29115.1"/>
    <property type="molecule type" value="mRNA"/>
</dbReference>
<dbReference type="EMBL" id="AK150170">
    <property type="protein sequence ID" value="BAE29358.1"/>
    <property type="molecule type" value="mRNA"/>
</dbReference>
<dbReference type="EMBL" id="AK156376">
    <property type="protein sequence ID" value="BAE33692.1"/>
    <property type="molecule type" value="mRNA"/>
</dbReference>
<dbReference type="EMBL" id="AK156622">
    <property type="protein sequence ID" value="BAE33779.1"/>
    <property type="molecule type" value="mRNA"/>
</dbReference>
<dbReference type="EMBL" id="AK156934">
    <property type="protein sequence ID" value="BAE33904.1"/>
    <property type="molecule type" value="mRNA"/>
</dbReference>
<dbReference type="EMBL" id="AK157607">
    <property type="protein sequence ID" value="BAE34133.1"/>
    <property type="molecule type" value="mRNA"/>
</dbReference>
<dbReference type="EMBL" id="BC027152">
    <property type="protein sequence ID" value="AAH27152.1"/>
    <property type="molecule type" value="mRNA"/>
</dbReference>
<dbReference type="CCDS" id="CCDS14876.1">
    <molecule id="Q3U108-4"/>
</dbReference>
<dbReference type="CCDS" id="CCDS48239.1">
    <molecule id="Q3U108-1"/>
</dbReference>
<dbReference type="CCDS" id="CCDS69878.1">
    <molecule id="Q3U108-5"/>
</dbReference>
<dbReference type="CCDS" id="CCDS78560.1">
    <molecule id="Q3U108-2"/>
</dbReference>
<dbReference type="RefSeq" id="NP_001165676.1">
    <molecule id="Q3U108-1"/>
    <property type="nucleotide sequence ID" value="NM_001172205.1"/>
</dbReference>
<dbReference type="RefSeq" id="NP_001165677.1">
    <property type="nucleotide sequence ID" value="NM_001172206.1"/>
</dbReference>
<dbReference type="RefSeq" id="NP_001277655.1">
    <property type="nucleotide sequence ID" value="NM_001290726.1"/>
</dbReference>
<dbReference type="RefSeq" id="NP_001277656.1">
    <molecule id="Q3U108-5"/>
    <property type="nucleotide sequence ID" value="NM_001290727.1"/>
</dbReference>
<dbReference type="RefSeq" id="NP_666108.2">
    <molecule id="Q3U108-4"/>
    <property type="nucleotide sequence ID" value="NM_145996.4"/>
</dbReference>
<dbReference type="SMR" id="Q3U108"/>
<dbReference type="BioGRID" id="229569">
    <property type="interactions" value="14"/>
</dbReference>
<dbReference type="FunCoup" id="Q3U108">
    <property type="interactions" value="630"/>
</dbReference>
<dbReference type="IntAct" id="Q3U108">
    <property type="interactions" value="2"/>
</dbReference>
<dbReference type="STRING" id="10090.ENSMUSP00000095385"/>
<dbReference type="GlyGen" id="Q3U108">
    <property type="glycosylation" value="3 sites"/>
</dbReference>
<dbReference type="iPTMnet" id="Q3U108"/>
<dbReference type="PhosphoSitePlus" id="Q3U108"/>
<dbReference type="CPTAC" id="non-CPTAC-3309"/>
<dbReference type="PaxDb" id="10090-ENSMUSP00000110684"/>
<dbReference type="ProteomicsDB" id="273940">
    <molecule id="Q3U108-1"/>
</dbReference>
<dbReference type="ProteomicsDB" id="273941">
    <molecule id="Q3U108-2"/>
</dbReference>
<dbReference type="ProteomicsDB" id="273942">
    <molecule id="Q3U108-3"/>
</dbReference>
<dbReference type="ProteomicsDB" id="273943">
    <molecule id="Q3U108-4"/>
</dbReference>
<dbReference type="ProteomicsDB" id="274968">
    <molecule id="Q3U108-5"/>
</dbReference>
<dbReference type="Antibodypedia" id="1050">
    <property type="antibodies" value="216 antibodies from 18 providers"/>
</dbReference>
<dbReference type="DNASU" id="214855"/>
<dbReference type="Ensembl" id="ENSMUST00000115029.2">
    <molecule id="Q3U108-5"/>
    <property type="protein sequence ID" value="ENSMUSP00000110681.2"/>
    <property type="gene ID" value="ENSMUSG00000037447.17"/>
</dbReference>
<dbReference type="Ensembl" id="ENSMUST00000115031.8">
    <molecule id="Q3U108-3"/>
    <property type="protein sequence ID" value="ENSMUSP00000110683.2"/>
    <property type="gene ID" value="ENSMUSG00000037447.17"/>
</dbReference>
<dbReference type="Ensembl" id="ENSMUST00000115032.8">
    <molecule id="Q3U108-1"/>
    <property type="protein sequence ID" value="ENSMUSP00000110684.2"/>
    <property type="gene ID" value="ENSMUSG00000037447.17"/>
</dbReference>
<dbReference type="Ensembl" id="ENSMUST00000137906.2">
    <molecule id="Q3U108-4"/>
    <property type="protein sequence ID" value="ENSMUSP00000117810.2"/>
    <property type="gene ID" value="ENSMUSG00000037447.17"/>
</dbReference>
<dbReference type="GeneID" id="214855"/>
<dbReference type="KEGG" id="mmu:214855"/>
<dbReference type="UCSC" id="uc007apu.2">
    <molecule id="Q3U108-4"/>
    <property type="organism name" value="mouse"/>
</dbReference>
<dbReference type="UCSC" id="uc007apv.2">
    <molecule id="Q3U108-1"/>
    <property type="organism name" value="mouse"/>
</dbReference>
<dbReference type="UCSC" id="uc007apy.2">
    <molecule id="Q3U108-3"/>
    <property type="organism name" value="mouse"/>
</dbReference>
<dbReference type="AGR" id="MGI:2443039"/>
<dbReference type="CTD" id="10865"/>
<dbReference type="MGI" id="MGI:2443039">
    <property type="gene designation" value="Arid5a"/>
</dbReference>
<dbReference type="VEuPathDB" id="HostDB:ENSMUSG00000037447"/>
<dbReference type="eggNOG" id="KOG2744">
    <property type="taxonomic scope" value="Eukaryota"/>
</dbReference>
<dbReference type="GeneTree" id="ENSGT00940000161253"/>
<dbReference type="HOGENOM" id="CLU_032275_0_0_1"/>
<dbReference type="InParanoid" id="Q3U108"/>
<dbReference type="OMA" id="DQMVPGK"/>
<dbReference type="TreeFam" id="TF324725"/>
<dbReference type="BioGRID-ORCS" id="214855">
    <property type="hits" value="0 hits in 78 CRISPR screens"/>
</dbReference>
<dbReference type="PRO" id="PR:Q3U108"/>
<dbReference type="Proteomes" id="UP000000589">
    <property type="component" value="Chromosome 1"/>
</dbReference>
<dbReference type="RNAct" id="Q3U108">
    <property type="molecule type" value="protein"/>
</dbReference>
<dbReference type="Bgee" id="ENSMUSG00000037447">
    <property type="expression patterns" value="Expressed in granulocyte and 96 other cell types or tissues"/>
</dbReference>
<dbReference type="ExpressionAtlas" id="Q3U108">
    <property type="expression patterns" value="baseline and differential"/>
</dbReference>
<dbReference type="GO" id="GO:0005730">
    <property type="term" value="C:nucleolus"/>
    <property type="evidence" value="ECO:0007669"/>
    <property type="project" value="Ensembl"/>
</dbReference>
<dbReference type="GO" id="GO:0005654">
    <property type="term" value="C:nucleoplasm"/>
    <property type="evidence" value="ECO:0007669"/>
    <property type="project" value="Ensembl"/>
</dbReference>
<dbReference type="GO" id="GO:0005634">
    <property type="term" value="C:nucleus"/>
    <property type="evidence" value="ECO:0000314"/>
    <property type="project" value="MGI"/>
</dbReference>
<dbReference type="GO" id="GO:0005667">
    <property type="term" value="C:transcription regulator complex"/>
    <property type="evidence" value="ECO:0000353"/>
    <property type="project" value="MGI"/>
</dbReference>
<dbReference type="GO" id="GO:0003682">
    <property type="term" value="F:chromatin binding"/>
    <property type="evidence" value="ECO:0000314"/>
    <property type="project" value="MGI"/>
</dbReference>
<dbReference type="GO" id="GO:0042802">
    <property type="term" value="F:identical protein binding"/>
    <property type="evidence" value="ECO:0007669"/>
    <property type="project" value="Ensembl"/>
</dbReference>
<dbReference type="GO" id="GO:0035925">
    <property type="term" value="F:mRNA 3'-UTR AU-rich region binding"/>
    <property type="evidence" value="ECO:0000250"/>
    <property type="project" value="UniProtKB"/>
</dbReference>
<dbReference type="GO" id="GO:0050681">
    <property type="term" value="F:nuclear androgen receptor binding"/>
    <property type="evidence" value="ECO:0007669"/>
    <property type="project" value="Ensembl"/>
</dbReference>
<dbReference type="GO" id="GO:0030331">
    <property type="term" value="F:nuclear estrogen receptor binding"/>
    <property type="evidence" value="ECO:0007669"/>
    <property type="project" value="Ensembl"/>
</dbReference>
<dbReference type="GO" id="GO:0046965">
    <property type="term" value="F:nuclear retinoid X receptor binding"/>
    <property type="evidence" value="ECO:0007669"/>
    <property type="project" value="Ensembl"/>
</dbReference>
<dbReference type="GO" id="GO:0046966">
    <property type="term" value="F:nuclear thyroid hormone receptor binding"/>
    <property type="evidence" value="ECO:0007669"/>
    <property type="project" value="Ensembl"/>
</dbReference>
<dbReference type="GO" id="GO:0035613">
    <property type="term" value="F:RNA stem-loop binding"/>
    <property type="evidence" value="ECO:0000314"/>
    <property type="project" value="UniProtKB"/>
</dbReference>
<dbReference type="GO" id="GO:0043565">
    <property type="term" value="F:sequence-specific DNA binding"/>
    <property type="evidence" value="ECO:0007669"/>
    <property type="project" value="Ensembl"/>
</dbReference>
<dbReference type="GO" id="GO:0003714">
    <property type="term" value="F:transcription corepressor activity"/>
    <property type="evidence" value="ECO:0007669"/>
    <property type="project" value="Ensembl"/>
</dbReference>
<dbReference type="GO" id="GO:0071391">
    <property type="term" value="P:cellular response to estrogen stimulus"/>
    <property type="evidence" value="ECO:0007669"/>
    <property type="project" value="Ensembl"/>
</dbReference>
<dbReference type="GO" id="GO:0071222">
    <property type="term" value="P:cellular response to lipopolysaccharide"/>
    <property type="evidence" value="ECO:0000315"/>
    <property type="project" value="UniProtKB"/>
</dbReference>
<dbReference type="GO" id="GO:0002062">
    <property type="term" value="P:chondrocyte differentiation"/>
    <property type="evidence" value="ECO:0000314"/>
    <property type="project" value="MGI"/>
</dbReference>
<dbReference type="GO" id="GO:0045087">
    <property type="term" value="P:innate immune response"/>
    <property type="evidence" value="ECO:0007669"/>
    <property type="project" value="UniProtKB-KW"/>
</dbReference>
<dbReference type="GO" id="GO:0000122">
    <property type="term" value="P:negative regulation of transcription by RNA polymerase II"/>
    <property type="evidence" value="ECO:0007669"/>
    <property type="project" value="Ensembl"/>
</dbReference>
<dbReference type="GO" id="GO:1905870">
    <property type="term" value="P:positive regulation of 3'-UTR-mediated mRNA stabilization"/>
    <property type="evidence" value="ECO:0000250"/>
    <property type="project" value="UniProtKB"/>
</dbReference>
<dbReference type="GO" id="GO:0032740">
    <property type="term" value="P:positive regulation of interleukin-17 production"/>
    <property type="evidence" value="ECO:0000315"/>
    <property type="project" value="UniProtKB"/>
</dbReference>
<dbReference type="GO" id="GO:0032755">
    <property type="term" value="P:positive regulation of interleukin-6 production"/>
    <property type="evidence" value="ECO:0000315"/>
    <property type="project" value="UniProtKB"/>
</dbReference>
<dbReference type="GO" id="GO:2000556">
    <property type="term" value="P:positive regulation of T-helper 1 cell cytokine production"/>
    <property type="evidence" value="ECO:0000315"/>
    <property type="project" value="UniProtKB"/>
</dbReference>
<dbReference type="GO" id="GO:2000318">
    <property type="term" value="P:positive regulation of T-helper 17 type immune response"/>
    <property type="evidence" value="ECO:0000315"/>
    <property type="project" value="UniProtKB"/>
</dbReference>
<dbReference type="GO" id="GO:0045944">
    <property type="term" value="P:positive regulation of transcription by RNA polymerase II"/>
    <property type="evidence" value="ECO:0000316"/>
    <property type="project" value="MGI"/>
</dbReference>
<dbReference type="GO" id="GO:0032760">
    <property type="term" value="P:positive regulation of tumor necrosis factor production"/>
    <property type="evidence" value="ECO:0000315"/>
    <property type="project" value="UniProtKB"/>
</dbReference>
<dbReference type="GO" id="GO:0032729">
    <property type="term" value="P:positive regulation of type II interferon production"/>
    <property type="evidence" value="ECO:0000315"/>
    <property type="project" value="UniProtKB"/>
</dbReference>
<dbReference type="CDD" id="cd16884">
    <property type="entry name" value="ARID_ARID5A"/>
    <property type="match status" value="1"/>
</dbReference>
<dbReference type="FunFam" id="1.10.150.60:FF:000004">
    <property type="entry name" value="AT-rich interactive domain-containing protein 5B"/>
    <property type="match status" value="1"/>
</dbReference>
<dbReference type="Gene3D" id="1.10.150.60">
    <property type="entry name" value="ARID DNA-binding domain"/>
    <property type="match status" value="1"/>
</dbReference>
<dbReference type="InterPro" id="IPR051232">
    <property type="entry name" value="ARID/SWI1_ChromRemod"/>
</dbReference>
<dbReference type="InterPro" id="IPR001606">
    <property type="entry name" value="ARID_dom"/>
</dbReference>
<dbReference type="InterPro" id="IPR036431">
    <property type="entry name" value="ARID_dom_sf"/>
</dbReference>
<dbReference type="PANTHER" id="PTHR13964:SF25">
    <property type="entry name" value="AT-RICH INTERACTIVE DOMAIN-CONTAINING PROTEIN 5A"/>
    <property type="match status" value="1"/>
</dbReference>
<dbReference type="PANTHER" id="PTHR13964">
    <property type="entry name" value="RBP-RELATED"/>
    <property type="match status" value="1"/>
</dbReference>
<dbReference type="Pfam" id="PF01388">
    <property type="entry name" value="ARID"/>
    <property type="match status" value="1"/>
</dbReference>
<dbReference type="SMART" id="SM01014">
    <property type="entry name" value="ARID"/>
    <property type="match status" value="1"/>
</dbReference>
<dbReference type="SMART" id="SM00501">
    <property type="entry name" value="BRIGHT"/>
    <property type="match status" value="1"/>
</dbReference>
<dbReference type="SUPFAM" id="SSF46774">
    <property type="entry name" value="ARID-like"/>
    <property type="match status" value="1"/>
</dbReference>
<dbReference type="PROSITE" id="PS51011">
    <property type="entry name" value="ARID"/>
    <property type="match status" value="1"/>
</dbReference>
<evidence type="ECO:0000250" key="1">
    <source>
        <dbReference type="UniProtKB" id="Q03989"/>
    </source>
</evidence>
<evidence type="ECO:0000255" key="2">
    <source>
        <dbReference type="PROSITE-ProRule" id="PRU00355"/>
    </source>
</evidence>
<evidence type="ECO:0000256" key="3">
    <source>
        <dbReference type="SAM" id="MobiDB-lite"/>
    </source>
</evidence>
<evidence type="ECO:0000269" key="4">
    <source>
    </source>
</evidence>
<evidence type="ECO:0000269" key="5">
    <source>
    </source>
</evidence>
<evidence type="ECO:0000269" key="6">
    <source>
    </source>
</evidence>
<evidence type="ECO:0000269" key="7">
    <source>
    </source>
</evidence>
<evidence type="ECO:0000269" key="8">
    <source>
    </source>
</evidence>
<evidence type="ECO:0000269" key="9">
    <source>
    </source>
</evidence>
<evidence type="ECO:0000269" key="10">
    <source>
    </source>
</evidence>
<evidence type="ECO:0000303" key="11">
    <source>
    </source>
</evidence>
<evidence type="ECO:0000303" key="12">
    <source>
    </source>
</evidence>
<evidence type="ECO:0000305" key="13"/>
<evidence type="ECO:0007744" key="14">
    <source>
    </source>
</evidence>
<sequence length="590" mass="63898">MAAPPAKGNTEQSEEGDLPQLPVSPKPDDEQSRSQSPTQLQDSPEAGGEQEEEQAFLVSLYKFMKERHTPIERVPHLGFKQINLWKIYKAVEKLGAYELVTGRRLWKNVYDELGGSPGSTSAATCTRRHYERLVLPYVRHLKGEDDKPLPPTKPRKQYKMAKELRGDDGTTEKLKKAKDSEERRVEQTTPGKTKSDATGQTQLPCQGSSRDSTEQLGPVSGPSPPLTGASSCPEAYKRLLSSFYCKGAHGIMSPLAKKKLLAQVSKAEALQCQEEGCRHGARSPNKDIQDSPQNLRGPAENSEHQLTPREGLQAPGGSTRMEAQVGPCPTAPMFSGCFHAYPTEVLKPVSQHPRDFFSGLKDRVLLGPPGKEEGPTTKESHLVWGGDANHPSAFHKGSTRKRSFYPKPKACWVSPMAKVPTERPGAPSPHPSSPGLGSKRGLEEEGFAHGGKKLRAVSPFLKEVDSKETGGKPAAPGLAVSCLLGPTPGPTPPEAYRGTMLRCPLNFTGSADPLKGQASLPFSPLVIPAFPAHLLATTGSSPMAASLMHFPPTPYDAVLRNRLGPASSAWHMPPVTTYAAPHFFHLNTKL</sequence>